<keyword id="KW-0963">Cytoplasm</keyword>
<keyword id="KW-0238">DNA-binding</keyword>
<keyword id="KW-0597">Phosphoprotein</keyword>
<keyword id="KW-1185">Reference proteome</keyword>
<keyword id="KW-0804">Transcription</keyword>
<keyword id="KW-0805">Transcription regulation</keyword>
<keyword id="KW-0902">Two-component regulatory system</keyword>
<feature type="chain" id="PRO_0000081184" description="Transcriptional activator protein PfeR">
    <location>
        <begin position="1"/>
        <end position="305"/>
    </location>
</feature>
<feature type="domain" description="Response regulatory" evidence="1">
    <location>
        <begin position="79"/>
        <end position="192"/>
    </location>
</feature>
<feature type="DNA-binding region" description="OmpR/PhoB-type" evidence="2">
    <location>
        <begin position="200"/>
        <end position="301"/>
    </location>
</feature>
<feature type="modified residue" description="4-aspartylphosphate" evidence="1">
    <location>
        <position position="128"/>
    </location>
</feature>
<accession>Q04803</accession>
<name>PFER_PSEAE</name>
<sequence>MIVQPSAVAKGWPIATTLLPASCGPADPKPEPKPKQRRLCRKVFPLRARCGALAHCPIPGKNEIFTNVNHSHISIPSPRLLLVEDDPRLREDLDAHFRRRGFRVTVCGDGSHGLEAAGREAFDLVLLDIMLPGLDGLALLESLRREQATPVMLMSALGAEQDRISGFTRGADDYLPKPFSLAELDARTDALLRRVRLDRLPLAQRRDTRLVFDDQAQDVLHQGLPAGLTPSEYRLLATLREHAGEALSKPFLYRSVLHRSYTRLDRGLDVHVCNLRRKLAVVAVRHLQIQAVRGQGYLLVETEHP</sequence>
<proteinExistence type="inferred from homology"/>
<gene>
    <name type="primary">pfeR</name>
    <name type="ordered locus">PA2686</name>
</gene>
<reference key="1">
    <citation type="journal article" date="1993" name="Mol. Microbiol.">
        <title>Expression of the ferric enterobactin receptor (PfeA) of Pseudomonas aeruginosa: involvement of a two-component regulatory system.</title>
        <authorList>
            <person name="Dean C.R."/>
            <person name="Poole K."/>
        </authorList>
    </citation>
    <scope>NUCLEOTIDE SEQUENCE [GENOMIC DNA]</scope>
    <source>
        <strain>PAO</strain>
    </source>
</reference>
<reference key="2">
    <citation type="journal article" date="2000" name="Nature">
        <title>Complete genome sequence of Pseudomonas aeruginosa PAO1, an opportunistic pathogen.</title>
        <authorList>
            <person name="Stover C.K."/>
            <person name="Pham X.-Q.T."/>
            <person name="Erwin A.L."/>
            <person name="Mizoguchi S.D."/>
            <person name="Warrener P."/>
            <person name="Hickey M.J."/>
            <person name="Brinkman F.S.L."/>
            <person name="Hufnagle W.O."/>
            <person name="Kowalik D.J."/>
            <person name="Lagrou M."/>
            <person name="Garber R.L."/>
            <person name="Goltry L."/>
            <person name="Tolentino E."/>
            <person name="Westbrock-Wadman S."/>
            <person name="Yuan Y."/>
            <person name="Brody L.L."/>
            <person name="Coulter S.N."/>
            <person name="Folger K.R."/>
            <person name="Kas A."/>
            <person name="Larbig K."/>
            <person name="Lim R.M."/>
            <person name="Smith K.A."/>
            <person name="Spencer D.H."/>
            <person name="Wong G.K.-S."/>
            <person name="Wu Z."/>
            <person name="Paulsen I.T."/>
            <person name="Reizer J."/>
            <person name="Saier M.H. Jr."/>
            <person name="Hancock R.E.W."/>
            <person name="Lory S."/>
            <person name="Olson M.V."/>
        </authorList>
    </citation>
    <scope>NUCLEOTIDE SEQUENCE [LARGE SCALE GENOMIC DNA]</scope>
    <source>
        <strain>ATCC 15692 / DSM 22644 / CIP 104116 / JCM 14847 / LMG 12228 / 1C / PRS 101 / PAO1</strain>
    </source>
</reference>
<comment type="function">
    <text>Member of the two-component regulatory system PfeR/PfeS. Activates expression of the ferric enterobactin receptor.</text>
</comment>
<comment type="subcellular location">
    <subcellularLocation>
        <location evidence="3">Cytoplasm</location>
    </subcellularLocation>
</comment>
<comment type="PTM">
    <text evidence="3">Phosphorylated by PfeS.</text>
</comment>
<organism>
    <name type="scientific">Pseudomonas aeruginosa (strain ATCC 15692 / DSM 22644 / CIP 104116 / JCM 14847 / LMG 12228 / 1C / PRS 101 / PAO1)</name>
    <dbReference type="NCBI Taxonomy" id="208964"/>
    <lineage>
        <taxon>Bacteria</taxon>
        <taxon>Pseudomonadati</taxon>
        <taxon>Pseudomonadota</taxon>
        <taxon>Gammaproteobacteria</taxon>
        <taxon>Pseudomonadales</taxon>
        <taxon>Pseudomonadaceae</taxon>
        <taxon>Pseudomonas</taxon>
    </lineage>
</organism>
<dbReference type="EMBL" id="L07739">
    <property type="protein sequence ID" value="AAA25929.1"/>
    <property type="molecule type" value="Genomic_DNA"/>
</dbReference>
<dbReference type="EMBL" id="AE004091">
    <property type="protein sequence ID" value="AAG06074.1"/>
    <property type="molecule type" value="Genomic_DNA"/>
</dbReference>
<dbReference type="PIR" id="S34996">
    <property type="entry name" value="S34996"/>
</dbReference>
<dbReference type="RefSeq" id="NP_251376.1">
    <property type="nucleotide sequence ID" value="NC_002516.2"/>
</dbReference>
<dbReference type="RefSeq" id="WP_010895629.1">
    <property type="nucleotide sequence ID" value="NC_002516.2"/>
</dbReference>
<dbReference type="SMR" id="Q04803"/>
<dbReference type="STRING" id="208964.PA2686"/>
<dbReference type="PaxDb" id="208964-PA2686"/>
<dbReference type="DNASU" id="882764"/>
<dbReference type="GeneID" id="882764"/>
<dbReference type="KEGG" id="pae:PA2686"/>
<dbReference type="PATRIC" id="fig|208964.12.peg.2811"/>
<dbReference type="PseudoCAP" id="PA2686"/>
<dbReference type="HOGENOM" id="CLU_000445_30_4_6"/>
<dbReference type="InParanoid" id="Q04803"/>
<dbReference type="OrthoDB" id="9802426at2"/>
<dbReference type="PhylomeDB" id="Q04803"/>
<dbReference type="BioCyc" id="PAER208964:G1FZ6-2726-MONOMER"/>
<dbReference type="Proteomes" id="UP000002438">
    <property type="component" value="Chromosome"/>
</dbReference>
<dbReference type="GO" id="GO:0005829">
    <property type="term" value="C:cytosol"/>
    <property type="evidence" value="ECO:0000318"/>
    <property type="project" value="GO_Central"/>
</dbReference>
<dbReference type="GO" id="GO:0032993">
    <property type="term" value="C:protein-DNA complex"/>
    <property type="evidence" value="ECO:0000318"/>
    <property type="project" value="GO_Central"/>
</dbReference>
<dbReference type="GO" id="GO:0000156">
    <property type="term" value="F:phosphorelay response regulator activity"/>
    <property type="evidence" value="ECO:0000318"/>
    <property type="project" value="GO_Central"/>
</dbReference>
<dbReference type="GO" id="GO:0000976">
    <property type="term" value="F:transcription cis-regulatory region binding"/>
    <property type="evidence" value="ECO:0000318"/>
    <property type="project" value="GO_Central"/>
</dbReference>
<dbReference type="GO" id="GO:0000160">
    <property type="term" value="P:phosphorelay signal transduction system"/>
    <property type="evidence" value="ECO:0000314"/>
    <property type="project" value="PseudoCAP"/>
</dbReference>
<dbReference type="GO" id="GO:0006355">
    <property type="term" value="P:regulation of DNA-templated transcription"/>
    <property type="evidence" value="ECO:0000318"/>
    <property type="project" value="GO_Central"/>
</dbReference>
<dbReference type="CDD" id="cd00383">
    <property type="entry name" value="trans_reg_C"/>
    <property type="match status" value="1"/>
</dbReference>
<dbReference type="Gene3D" id="3.40.50.2300">
    <property type="match status" value="1"/>
</dbReference>
<dbReference type="Gene3D" id="6.10.250.690">
    <property type="match status" value="1"/>
</dbReference>
<dbReference type="Gene3D" id="1.10.10.10">
    <property type="entry name" value="Winged helix-like DNA-binding domain superfamily/Winged helix DNA-binding domain"/>
    <property type="match status" value="1"/>
</dbReference>
<dbReference type="InterPro" id="IPR011006">
    <property type="entry name" value="CheY-like_superfamily"/>
</dbReference>
<dbReference type="InterPro" id="IPR001867">
    <property type="entry name" value="OmpR/PhoB-type_DNA-bd"/>
</dbReference>
<dbReference type="InterPro" id="IPR016032">
    <property type="entry name" value="Sig_transdc_resp-reg_C-effctor"/>
</dbReference>
<dbReference type="InterPro" id="IPR001789">
    <property type="entry name" value="Sig_transdc_resp-reg_receiver"/>
</dbReference>
<dbReference type="InterPro" id="IPR039420">
    <property type="entry name" value="WalR-like"/>
</dbReference>
<dbReference type="InterPro" id="IPR036388">
    <property type="entry name" value="WH-like_DNA-bd_sf"/>
</dbReference>
<dbReference type="PANTHER" id="PTHR48111">
    <property type="entry name" value="REGULATOR OF RPOS"/>
    <property type="match status" value="1"/>
</dbReference>
<dbReference type="PANTHER" id="PTHR48111:SF39">
    <property type="entry name" value="TRANSCRIPTIONAL REGULATORY PROTEIN CPXR"/>
    <property type="match status" value="1"/>
</dbReference>
<dbReference type="Pfam" id="PF00072">
    <property type="entry name" value="Response_reg"/>
    <property type="match status" value="1"/>
</dbReference>
<dbReference type="Pfam" id="PF00486">
    <property type="entry name" value="Trans_reg_C"/>
    <property type="match status" value="1"/>
</dbReference>
<dbReference type="SMART" id="SM00448">
    <property type="entry name" value="REC"/>
    <property type="match status" value="1"/>
</dbReference>
<dbReference type="SMART" id="SM00862">
    <property type="entry name" value="Trans_reg_C"/>
    <property type="match status" value="1"/>
</dbReference>
<dbReference type="SUPFAM" id="SSF46894">
    <property type="entry name" value="C-terminal effector domain of the bipartite response regulators"/>
    <property type="match status" value="1"/>
</dbReference>
<dbReference type="SUPFAM" id="SSF52172">
    <property type="entry name" value="CheY-like"/>
    <property type="match status" value="1"/>
</dbReference>
<dbReference type="PROSITE" id="PS51755">
    <property type="entry name" value="OMPR_PHOB"/>
    <property type="match status" value="1"/>
</dbReference>
<dbReference type="PROSITE" id="PS50110">
    <property type="entry name" value="RESPONSE_REGULATORY"/>
    <property type="match status" value="1"/>
</dbReference>
<evidence type="ECO:0000255" key="1">
    <source>
        <dbReference type="PROSITE-ProRule" id="PRU00169"/>
    </source>
</evidence>
<evidence type="ECO:0000255" key="2">
    <source>
        <dbReference type="PROSITE-ProRule" id="PRU01091"/>
    </source>
</evidence>
<evidence type="ECO:0000305" key="3"/>
<protein>
    <recommendedName>
        <fullName>Transcriptional activator protein PfeR</fullName>
    </recommendedName>
</protein>